<sequence length="369" mass="41598">MSDLEQLERQILEDIAAAVDEQGIEAVRVAALGKKGTVSEKLKTLGGMSPEERQMQGPAINGLKNRVTEALSERRTELRKAAVAARLEREKVDVTLPVRESAASRGRIHPISQVIDEITAIFADMGFSIAEGPDIETDYYNFTALNFPEGHPAREMHDTFFFNPDEKGERKLLRTHTSPVQVHTMEKFAAMRDKEGRDEPIRIVIPGKTYRMDSDATHSPMFHQVEGLVVDKSANVANMKWVLEEFCKAFFEVPSVKMRMRPSFFPFTEPSVEVDIQCDRSGPHVKFGEGNDWLEILGCGMVHPNVLRMSGYDPEVYQGFAWGMGIDRIAMLKYGMPDLRAFFDADVRWIEHYGFRPLDIPTLFGGLSA</sequence>
<evidence type="ECO:0000255" key="1">
    <source>
        <dbReference type="HAMAP-Rule" id="MF_00281"/>
    </source>
</evidence>
<comment type="catalytic activity">
    <reaction evidence="1">
        <text>tRNA(Phe) + L-phenylalanine + ATP = L-phenylalanyl-tRNA(Phe) + AMP + diphosphate + H(+)</text>
        <dbReference type="Rhea" id="RHEA:19413"/>
        <dbReference type="Rhea" id="RHEA-COMP:9668"/>
        <dbReference type="Rhea" id="RHEA-COMP:9699"/>
        <dbReference type="ChEBI" id="CHEBI:15378"/>
        <dbReference type="ChEBI" id="CHEBI:30616"/>
        <dbReference type="ChEBI" id="CHEBI:33019"/>
        <dbReference type="ChEBI" id="CHEBI:58095"/>
        <dbReference type="ChEBI" id="CHEBI:78442"/>
        <dbReference type="ChEBI" id="CHEBI:78531"/>
        <dbReference type="ChEBI" id="CHEBI:456215"/>
        <dbReference type="EC" id="6.1.1.20"/>
    </reaction>
</comment>
<comment type="cofactor">
    <cofactor evidence="1">
        <name>Mg(2+)</name>
        <dbReference type="ChEBI" id="CHEBI:18420"/>
    </cofactor>
    <text evidence="1">Binds 2 magnesium ions per tetramer.</text>
</comment>
<comment type="subunit">
    <text evidence="1">Tetramer of two alpha and two beta subunits.</text>
</comment>
<comment type="subcellular location">
    <subcellularLocation>
        <location evidence="1">Cytoplasm</location>
    </subcellularLocation>
</comment>
<comment type="similarity">
    <text evidence="1">Belongs to the class-II aminoacyl-tRNA synthetase family. Phe-tRNA synthetase alpha subunit type 1 subfamily.</text>
</comment>
<reference key="1">
    <citation type="journal article" date="2005" name="Infect. Immun.">
        <title>Whole-genome analyses of speciation events in pathogenic Brucellae.</title>
        <authorList>
            <person name="Chain P.S."/>
            <person name="Comerci D.J."/>
            <person name="Tolmasky M.E."/>
            <person name="Larimer F.W."/>
            <person name="Malfatti S.A."/>
            <person name="Vergez L.M."/>
            <person name="Aguero F."/>
            <person name="Land M.L."/>
            <person name="Ugalde R.A."/>
            <person name="Garcia E."/>
        </authorList>
    </citation>
    <scope>NUCLEOTIDE SEQUENCE [LARGE SCALE GENOMIC DNA]</scope>
    <source>
        <strain>2308</strain>
    </source>
</reference>
<organism>
    <name type="scientific">Brucella abortus (strain 2308)</name>
    <dbReference type="NCBI Taxonomy" id="359391"/>
    <lineage>
        <taxon>Bacteria</taxon>
        <taxon>Pseudomonadati</taxon>
        <taxon>Pseudomonadota</taxon>
        <taxon>Alphaproteobacteria</taxon>
        <taxon>Hyphomicrobiales</taxon>
        <taxon>Brucellaceae</taxon>
        <taxon>Brucella/Ochrobactrum group</taxon>
        <taxon>Brucella</taxon>
    </lineage>
</organism>
<feature type="chain" id="PRO_0000231968" description="Phenylalanine--tRNA ligase alpha subunit">
    <location>
        <begin position="1"/>
        <end position="369"/>
    </location>
</feature>
<feature type="binding site" evidence="1">
    <location>
        <position position="269"/>
    </location>
    <ligand>
        <name>Mg(2+)</name>
        <dbReference type="ChEBI" id="CHEBI:18420"/>
        <note>shared with beta subunit</note>
    </ligand>
</feature>
<accession>Q2YQV5</accession>
<proteinExistence type="inferred from homology"/>
<gene>
    <name evidence="1" type="primary">pheS</name>
    <name type="ordered locus">BAB1_2126</name>
</gene>
<keyword id="KW-0030">Aminoacyl-tRNA synthetase</keyword>
<keyword id="KW-0067">ATP-binding</keyword>
<keyword id="KW-0963">Cytoplasm</keyword>
<keyword id="KW-0436">Ligase</keyword>
<keyword id="KW-0460">Magnesium</keyword>
<keyword id="KW-0479">Metal-binding</keyword>
<keyword id="KW-0547">Nucleotide-binding</keyword>
<keyword id="KW-0648">Protein biosynthesis</keyword>
<keyword id="KW-1185">Reference proteome</keyword>
<dbReference type="EC" id="6.1.1.20" evidence="1"/>
<dbReference type="EMBL" id="AM040264">
    <property type="protein sequence ID" value="CAJ12082.1"/>
    <property type="molecule type" value="Genomic_DNA"/>
</dbReference>
<dbReference type="RefSeq" id="WP_002967041.1">
    <property type="nucleotide sequence ID" value="NZ_KN046823.1"/>
</dbReference>
<dbReference type="SMR" id="Q2YQV5"/>
<dbReference type="STRING" id="359391.BAB1_2126"/>
<dbReference type="GeneID" id="97534620"/>
<dbReference type="KEGG" id="bmf:BAB1_2126"/>
<dbReference type="PATRIC" id="fig|359391.11.peg.1358"/>
<dbReference type="HOGENOM" id="CLU_025086_0_1_5"/>
<dbReference type="PhylomeDB" id="Q2YQV5"/>
<dbReference type="Proteomes" id="UP000002719">
    <property type="component" value="Chromosome I"/>
</dbReference>
<dbReference type="GO" id="GO:0005737">
    <property type="term" value="C:cytoplasm"/>
    <property type="evidence" value="ECO:0007669"/>
    <property type="project" value="UniProtKB-SubCell"/>
</dbReference>
<dbReference type="GO" id="GO:0005524">
    <property type="term" value="F:ATP binding"/>
    <property type="evidence" value="ECO:0007669"/>
    <property type="project" value="UniProtKB-UniRule"/>
</dbReference>
<dbReference type="GO" id="GO:0000287">
    <property type="term" value="F:magnesium ion binding"/>
    <property type="evidence" value="ECO:0007669"/>
    <property type="project" value="UniProtKB-UniRule"/>
</dbReference>
<dbReference type="GO" id="GO:0004826">
    <property type="term" value="F:phenylalanine-tRNA ligase activity"/>
    <property type="evidence" value="ECO:0007669"/>
    <property type="project" value="UniProtKB-UniRule"/>
</dbReference>
<dbReference type="GO" id="GO:0000049">
    <property type="term" value="F:tRNA binding"/>
    <property type="evidence" value="ECO:0007669"/>
    <property type="project" value="InterPro"/>
</dbReference>
<dbReference type="GO" id="GO:0006432">
    <property type="term" value="P:phenylalanyl-tRNA aminoacylation"/>
    <property type="evidence" value="ECO:0007669"/>
    <property type="project" value="UniProtKB-UniRule"/>
</dbReference>
<dbReference type="CDD" id="cd00496">
    <property type="entry name" value="PheRS_alpha_core"/>
    <property type="match status" value="1"/>
</dbReference>
<dbReference type="FunFam" id="3.30.930.10:FF:000003">
    <property type="entry name" value="Phenylalanine--tRNA ligase alpha subunit"/>
    <property type="match status" value="1"/>
</dbReference>
<dbReference type="Gene3D" id="3.30.930.10">
    <property type="entry name" value="Bira Bifunctional Protein, Domain 2"/>
    <property type="match status" value="1"/>
</dbReference>
<dbReference type="HAMAP" id="MF_00281">
    <property type="entry name" value="Phe_tRNA_synth_alpha1"/>
    <property type="match status" value="1"/>
</dbReference>
<dbReference type="InterPro" id="IPR006195">
    <property type="entry name" value="aa-tRNA-synth_II"/>
</dbReference>
<dbReference type="InterPro" id="IPR045864">
    <property type="entry name" value="aa-tRNA-synth_II/BPL/LPL"/>
</dbReference>
<dbReference type="InterPro" id="IPR004529">
    <property type="entry name" value="Phe-tRNA-synth_IIc_asu"/>
</dbReference>
<dbReference type="InterPro" id="IPR004188">
    <property type="entry name" value="Phe-tRNA_ligase_II_N"/>
</dbReference>
<dbReference type="InterPro" id="IPR022911">
    <property type="entry name" value="Phe_tRNA_ligase_alpha1_bac"/>
</dbReference>
<dbReference type="InterPro" id="IPR002319">
    <property type="entry name" value="Phenylalanyl-tRNA_Synthase"/>
</dbReference>
<dbReference type="InterPro" id="IPR010978">
    <property type="entry name" value="tRNA-bd_arm"/>
</dbReference>
<dbReference type="NCBIfam" id="TIGR00468">
    <property type="entry name" value="pheS"/>
    <property type="match status" value="1"/>
</dbReference>
<dbReference type="PANTHER" id="PTHR11538:SF41">
    <property type="entry name" value="PHENYLALANINE--TRNA LIGASE, MITOCHONDRIAL"/>
    <property type="match status" value="1"/>
</dbReference>
<dbReference type="PANTHER" id="PTHR11538">
    <property type="entry name" value="PHENYLALANYL-TRNA SYNTHETASE"/>
    <property type="match status" value="1"/>
</dbReference>
<dbReference type="Pfam" id="PF02912">
    <property type="entry name" value="Phe_tRNA-synt_N"/>
    <property type="match status" value="1"/>
</dbReference>
<dbReference type="Pfam" id="PF01409">
    <property type="entry name" value="tRNA-synt_2d"/>
    <property type="match status" value="1"/>
</dbReference>
<dbReference type="SUPFAM" id="SSF55681">
    <property type="entry name" value="Class II aaRS and biotin synthetases"/>
    <property type="match status" value="1"/>
</dbReference>
<dbReference type="SUPFAM" id="SSF46589">
    <property type="entry name" value="tRNA-binding arm"/>
    <property type="match status" value="1"/>
</dbReference>
<dbReference type="PROSITE" id="PS50862">
    <property type="entry name" value="AA_TRNA_LIGASE_II"/>
    <property type="match status" value="1"/>
</dbReference>
<name>SYFA_BRUA2</name>
<protein>
    <recommendedName>
        <fullName evidence="1">Phenylalanine--tRNA ligase alpha subunit</fullName>
        <ecNumber evidence="1">6.1.1.20</ecNumber>
    </recommendedName>
    <alternativeName>
        <fullName evidence="1">Phenylalanyl-tRNA synthetase alpha subunit</fullName>
        <shortName evidence="1">PheRS</shortName>
    </alternativeName>
</protein>